<dbReference type="EMBL" id="AE009951">
    <property type="protein sequence ID" value="AAL94615.1"/>
    <property type="molecule type" value="Genomic_DNA"/>
</dbReference>
<dbReference type="RefSeq" id="NP_603316.1">
    <property type="nucleotide sequence ID" value="NC_003454.1"/>
</dbReference>
<dbReference type="RefSeq" id="WP_011016369.1">
    <property type="nucleotide sequence ID" value="NZ_OZ209243.1"/>
</dbReference>
<dbReference type="SMR" id="Q8RG96"/>
<dbReference type="FunCoup" id="Q8RG96">
    <property type="interactions" value="229"/>
</dbReference>
<dbReference type="STRING" id="190304.FN0412"/>
<dbReference type="PaxDb" id="190304-FN0412"/>
<dbReference type="EnsemblBacteria" id="AAL94615">
    <property type="protein sequence ID" value="AAL94615"/>
    <property type="gene ID" value="FN0412"/>
</dbReference>
<dbReference type="GeneID" id="79783418"/>
<dbReference type="KEGG" id="fnu:FN0412"/>
<dbReference type="PATRIC" id="fig|190304.8.peg.987"/>
<dbReference type="eggNOG" id="COG0353">
    <property type="taxonomic scope" value="Bacteria"/>
</dbReference>
<dbReference type="HOGENOM" id="CLU_060739_1_0_0"/>
<dbReference type="InParanoid" id="Q8RG96"/>
<dbReference type="BioCyc" id="FNUC190304:G1FZS-1006-MONOMER"/>
<dbReference type="Proteomes" id="UP000002521">
    <property type="component" value="Chromosome"/>
</dbReference>
<dbReference type="GO" id="GO:0003677">
    <property type="term" value="F:DNA binding"/>
    <property type="evidence" value="ECO:0007669"/>
    <property type="project" value="UniProtKB-UniRule"/>
</dbReference>
<dbReference type="GO" id="GO:0008270">
    <property type="term" value="F:zinc ion binding"/>
    <property type="evidence" value="ECO:0007669"/>
    <property type="project" value="UniProtKB-KW"/>
</dbReference>
<dbReference type="GO" id="GO:0006302">
    <property type="term" value="P:double-strand break repair"/>
    <property type="evidence" value="ECO:0000318"/>
    <property type="project" value="GO_Central"/>
</dbReference>
<dbReference type="GO" id="GO:0000725">
    <property type="term" value="P:recombinational repair"/>
    <property type="evidence" value="ECO:0000318"/>
    <property type="project" value="GO_Central"/>
</dbReference>
<dbReference type="CDD" id="cd01025">
    <property type="entry name" value="TOPRIM_recR"/>
    <property type="match status" value="1"/>
</dbReference>
<dbReference type="Gene3D" id="3.40.1360.10">
    <property type="match status" value="1"/>
</dbReference>
<dbReference type="Gene3D" id="6.10.250.240">
    <property type="match status" value="1"/>
</dbReference>
<dbReference type="Gene3D" id="1.10.8.420">
    <property type="entry name" value="RecR Domain 1"/>
    <property type="match status" value="1"/>
</dbReference>
<dbReference type="HAMAP" id="MF_00017">
    <property type="entry name" value="RecR"/>
    <property type="match status" value="1"/>
</dbReference>
<dbReference type="InterPro" id="IPR000093">
    <property type="entry name" value="DNA_Rcmb_RecR"/>
</dbReference>
<dbReference type="InterPro" id="IPR023627">
    <property type="entry name" value="Rcmb_RecR"/>
</dbReference>
<dbReference type="InterPro" id="IPR015967">
    <property type="entry name" value="Rcmb_RecR_Znf"/>
</dbReference>
<dbReference type="InterPro" id="IPR006171">
    <property type="entry name" value="TOPRIM_dom"/>
</dbReference>
<dbReference type="InterPro" id="IPR034137">
    <property type="entry name" value="TOPRIM_RecR"/>
</dbReference>
<dbReference type="NCBIfam" id="TIGR00615">
    <property type="entry name" value="recR"/>
    <property type="match status" value="1"/>
</dbReference>
<dbReference type="PANTHER" id="PTHR30446">
    <property type="entry name" value="RECOMBINATION PROTEIN RECR"/>
    <property type="match status" value="1"/>
</dbReference>
<dbReference type="PANTHER" id="PTHR30446:SF0">
    <property type="entry name" value="RECOMBINATION PROTEIN RECR"/>
    <property type="match status" value="1"/>
</dbReference>
<dbReference type="Pfam" id="PF21175">
    <property type="entry name" value="RecR_C"/>
    <property type="match status" value="1"/>
</dbReference>
<dbReference type="Pfam" id="PF21176">
    <property type="entry name" value="RecR_HhH"/>
    <property type="match status" value="1"/>
</dbReference>
<dbReference type="Pfam" id="PF02132">
    <property type="entry name" value="RecR_ZnF"/>
    <property type="match status" value="1"/>
</dbReference>
<dbReference type="Pfam" id="PF13662">
    <property type="entry name" value="Toprim_4"/>
    <property type="match status" value="1"/>
</dbReference>
<dbReference type="SMART" id="SM00493">
    <property type="entry name" value="TOPRIM"/>
    <property type="match status" value="1"/>
</dbReference>
<dbReference type="SUPFAM" id="SSF111304">
    <property type="entry name" value="Recombination protein RecR"/>
    <property type="match status" value="1"/>
</dbReference>
<dbReference type="PROSITE" id="PS01300">
    <property type="entry name" value="RECR"/>
    <property type="match status" value="1"/>
</dbReference>
<dbReference type="PROSITE" id="PS50880">
    <property type="entry name" value="TOPRIM"/>
    <property type="match status" value="1"/>
</dbReference>
<organism>
    <name type="scientific">Fusobacterium nucleatum subsp. nucleatum (strain ATCC 25586 / DSM 15643 / BCRC 10681 / CIP 101130 / JCM 8532 / KCTC 2640 / LMG 13131 / VPI 4355)</name>
    <dbReference type="NCBI Taxonomy" id="190304"/>
    <lineage>
        <taxon>Bacteria</taxon>
        <taxon>Fusobacteriati</taxon>
        <taxon>Fusobacteriota</taxon>
        <taxon>Fusobacteriia</taxon>
        <taxon>Fusobacteriales</taxon>
        <taxon>Fusobacteriaceae</taxon>
        <taxon>Fusobacterium</taxon>
    </lineage>
</organism>
<name>RECR_FUSNN</name>
<sequence length="197" mass="22028">MPTKSLERLILEFNKLPGVGQKSATRYAFHILNQSEEDVKNFAEALLAVKENVKKCHVCGNYCESDTCNICSDNARDHRIICVVEESKDIMILEKTTKFRGVYHVLNGRLDPLNGITPNELNIKSLLERIAKDDIEEIILATNPNIEGETTAMYLAKLMKNFGIKITKLASGIPMGGNLEFSDTATISRALDDRIEI</sequence>
<evidence type="ECO:0000255" key="1">
    <source>
        <dbReference type="HAMAP-Rule" id="MF_00017"/>
    </source>
</evidence>
<accession>Q8RG96</accession>
<keyword id="KW-0227">DNA damage</keyword>
<keyword id="KW-0233">DNA recombination</keyword>
<keyword id="KW-0234">DNA repair</keyword>
<keyword id="KW-0479">Metal-binding</keyword>
<keyword id="KW-1185">Reference proteome</keyword>
<keyword id="KW-0862">Zinc</keyword>
<keyword id="KW-0863">Zinc-finger</keyword>
<gene>
    <name evidence="1" type="primary">recR</name>
    <name type="ordered locus">FN0412</name>
</gene>
<protein>
    <recommendedName>
        <fullName evidence="1">Recombination protein RecR</fullName>
    </recommendedName>
</protein>
<reference key="1">
    <citation type="journal article" date="2002" name="J. Bacteriol.">
        <title>Genome sequence and analysis of the oral bacterium Fusobacterium nucleatum strain ATCC 25586.</title>
        <authorList>
            <person name="Kapatral V."/>
            <person name="Anderson I."/>
            <person name="Ivanova N."/>
            <person name="Reznik G."/>
            <person name="Los T."/>
            <person name="Lykidis A."/>
            <person name="Bhattacharyya A."/>
            <person name="Bartman A."/>
            <person name="Gardner W."/>
            <person name="Grechkin G."/>
            <person name="Zhu L."/>
            <person name="Vasieva O."/>
            <person name="Chu L."/>
            <person name="Kogan Y."/>
            <person name="Chaga O."/>
            <person name="Goltsman E."/>
            <person name="Bernal A."/>
            <person name="Larsen N."/>
            <person name="D'Souza M."/>
            <person name="Walunas T."/>
            <person name="Pusch G."/>
            <person name="Haselkorn R."/>
            <person name="Fonstein M."/>
            <person name="Kyrpides N.C."/>
            <person name="Overbeek R."/>
        </authorList>
    </citation>
    <scope>NUCLEOTIDE SEQUENCE [LARGE SCALE GENOMIC DNA]</scope>
    <source>
        <strain>ATCC 25586 / DSM 15643 / BCRC 10681 / CIP 101130 / JCM 8532 / KCTC 2640 / LMG 13131 / VPI 4355</strain>
    </source>
</reference>
<feature type="chain" id="PRO_0000190322" description="Recombination protein RecR">
    <location>
        <begin position="1"/>
        <end position="197"/>
    </location>
</feature>
<feature type="domain" description="Toprim" evidence="1">
    <location>
        <begin position="79"/>
        <end position="174"/>
    </location>
</feature>
<feature type="zinc finger region" description="C4-type" evidence="1">
    <location>
        <begin position="56"/>
        <end position="71"/>
    </location>
</feature>
<comment type="function">
    <text evidence="1">May play a role in DNA repair. It seems to be involved in an RecBC-independent recombinational process of DNA repair. It may act with RecF and RecO.</text>
</comment>
<comment type="similarity">
    <text evidence="1">Belongs to the RecR family.</text>
</comment>
<proteinExistence type="inferred from homology"/>